<proteinExistence type="inferred from homology"/>
<keyword id="KW-0001">2Fe-2S</keyword>
<keyword id="KW-0963">Cytoplasm</keyword>
<keyword id="KW-0408">Iron</keyword>
<keyword id="KW-0411">Iron-sulfur</keyword>
<keyword id="KW-0479">Metal-binding</keyword>
<keyword id="KW-0663">Pyridoxal phosphate</keyword>
<keyword id="KW-0808">Transferase</keyword>
<feature type="chain" id="PRO_1000119644" description="Cysteine desulfurase IscS">
    <location>
        <begin position="1"/>
        <end position="404"/>
    </location>
</feature>
<feature type="active site" description="Cysteine persulfide intermediate" evidence="1">
    <location>
        <position position="328"/>
    </location>
</feature>
<feature type="binding site" evidence="1">
    <location>
        <begin position="75"/>
        <end position="76"/>
    </location>
    <ligand>
        <name>pyridoxal 5'-phosphate</name>
        <dbReference type="ChEBI" id="CHEBI:597326"/>
    </ligand>
</feature>
<feature type="binding site" evidence="1">
    <location>
        <position position="155"/>
    </location>
    <ligand>
        <name>pyridoxal 5'-phosphate</name>
        <dbReference type="ChEBI" id="CHEBI:597326"/>
    </ligand>
</feature>
<feature type="binding site" evidence="1">
    <location>
        <position position="183"/>
    </location>
    <ligand>
        <name>pyridoxal 5'-phosphate</name>
        <dbReference type="ChEBI" id="CHEBI:597326"/>
    </ligand>
</feature>
<feature type="binding site" evidence="1">
    <location>
        <begin position="203"/>
        <end position="205"/>
    </location>
    <ligand>
        <name>pyridoxal 5'-phosphate</name>
        <dbReference type="ChEBI" id="CHEBI:597326"/>
    </ligand>
</feature>
<feature type="binding site" evidence="1">
    <location>
        <position position="243"/>
    </location>
    <ligand>
        <name>pyridoxal 5'-phosphate</name>
        <dbReference type="ChEBI" id="CHEBI:597326"/>
    </ligand>
</feature>
<feature type="binding site" description="via persulfide group" evidence="1">
    <location>
        <position position="328"/>
    </location>
    <ligand>
        <name>[2Fe-2S] cluster</name>
        <dbReference type="ChEBI" id="CHEBI:190135"/>
        <note>ligand shared with IscU</note>
    </ligand>
</feature>
<feature type="modified residue" description="N6-(pyridoxal phosphate)lysine" evidence="1">
    <location>
        <position position="206"/>
    </location>
</feature>
<name>ISCS_SALHS</name>
<comment type="function">
    <text evidence="1">Master enzyme that delivers sulfur to a number of partners involved in Fe-S cluster assembly, tRNA modification or cofactor biosynthesis. Catalyzes the removal of elemental sulfur and selenium atoms from cysteine and selenocysteine to produce alanine. Functions as a sulfur delivery protein for Fe-S cluster synthesis onto IscU, an Fe-S scaffold assembly protein, as well as other S acceptor proteins. Also functions as a selenium delivery protein in the pathway for the biosynthesis of selenophosphate.</text>
</comment>
<comment type="catalytic activity">
    <reaction evidence="1">
        <text>(sulfur carrier)-H + L-cysteine = (sulfur carrier)-SH + L-alanine</text>
        <dbReference type="Rhea" id="RHEA:43892"/>
        <dbReference type="Rhea" id="RHEA-COMP:14737"/>
        <dbReference type="Rhea" id="RHEA-COMP:14739"/>
        <dbReference type="ChEBI" id="CHEBI:29917"/>
        <dbReference type="ChEBI" id="CHEBI:35235"/>
        <dbReference type="ChEBI" id="CHEBI:57972"/>
        <dbReference type="ChEBI" id="CHEBI:64428"/>
        <dbReference type="EC" id="2.8.1.7"/>
    </reaction>
</comment>
<comment type="cofactor">
    <cofactor evidence="1">
        <name>pyridoxal 5'-phosphate</name>
        <dbReference type="ChEBI" id="CHEBI:597326"/>
    </cofactor>
</comment>
<comment type="pathway">
    <text evidence="1">Cofactor biosynthesis; iron-sulfur cluster biosynthesis.</text>
</comment>
<comment type="subunit">
    <text evidence="1">Homodimer. Forms a heterotetramer with IscU, interacts with other sulfur acceptors.</text>
</comment>
<comment type="subcellular location">
    <subcellularLocation>
        <location evidence="1">Cytoplasm</location>
    </subcellularLocation>
</comment>
<comment type="similarity">
    <text evidence="1">Belongs to the class-V pyridoxal-phosphate-dependent aminotransferase family. NifS/IscS subfamily.</text>
</comment>
<dbReference type="EC" id="2.8.1.7" evidence="1"/>
<dbReference type="EMBL" id="CP001120">
    <property type="protein sequence ID" value="ACF67696.1"/>
    <property type="molecule type" value="Genomic_DNA"/>
</dbReference>
<dbReference type="RefSeq" id="WP_000775263.1">
    <property type="nucleotide sequence ID" value="NC_011083.1"/>
</dbReference>
<dbReference type="SMR" id="B4TDB6"/>
<dbReference type="KEGG" id="seh:SeHA_C2805"/>
<dbReference type="HOGENOM" id="CLU_003433_0_2_6"/>
<dbReference type="UniPathway" id="UPA00266"/>
<dbReference type="Proteomes" id="UP000001866">
    <property type="component" value="Chromosome"/>
</dbReference>
<dbReference type="GO" id="GO:1990221">
    <property type="term" value="C:L-cysteine desulfurase complex"/>
    <property type="evidence" value="ECO:0007669"/>
    <property type="project" value="UniProtKB-ARBA"/>
</dbReference>
<dbReference type="GO" id="GO:0051537">
    <property type="term" value="F:2 iron, 2 sulfur cluster binding"/>
    <property type="evidence" value="ECO:0007669"/>
    <property type="project" value="UniProtKB-UniRule"/>
</dbReference>
<dbReference type="GO" id="GO:0031071">
    <property type="term" value="F:cysteine desulfurase activity"/>
    <property type="evidence" value="ECO:0007669"/>
    <property type="project" value="UniProtKB-UniRule"/>
</dbReference>
<dbReference type="GO" id="GO:0046872">
    <property type="term" value="F:metal ion binding"/>
    <property type="evidence" value="ECO:0007669"/>
    <property type="project" value="UniProtKB-KW"/>
</dbReference>
<dbReference type="GO" id="GO:0030170">
    <property type="term" value="F:pyridoxal phosphate binding"/>
    <property type="evidence" value="ECO:0007669"/>
    <property type="project" value="UniProtKB-UniRule"/>
</dbReference>
<dbReference type="GO" id="GO:0044571">
    <property type="term" value="P:[2Fe-2S] cluster assembly"/>
    <property type="evidence" value="ECO:0007669"/>
    <property type="project" value="UniProtKB-UniRule"/>
</dbReference>
<dbReference type="FunFam" id="3.40.640.10:FF:000003">
    <property type="entry name" value="Cysteine desulfurase IscS"/>
    <property type="match status" value="1"/>
</dbReference>
<dbReference type="FunFam" id="3.90.1150.10:FF:000002">
    <property type="entry name" value="Cysteine desulfurase IscS"/>
    <property type="match status" value="1"/>
</dbReference>
<dbReference type="Gene3D" id="3.90.1150.10">
    <property type="entry name" value="Aspartate Aminotransferase, domain 1"/>
    <property type="match status" value="1"/>
</dbReference>
<dbReference type="Gene3D" id="3.40.640.10">
    <property type="entry name" value="Type I PLP-dependent aspartate aminotransferase-like (Major domain)"/>
    <property type="match status" value="1"/>
</dbReference>
<dbReference type="HAMAP" id="MF_00331">
    <property type="entry name" value="Cys_desulf_IscS"/>
    <property type="match status" value="1"/>
</dbReference>
<dbReference type="InterPro" id="IPR000192">
    <property type="entry name" value="Aminotrans_V_dom"/>
</dbReference>
<dbReference type="InterPro" id="IPR020578">
    <property type="entry name" value="Aminotrans_V_PyrdxlP_BS"/>
</dbReference>
<dbReference type="InterPro" id="IPR010240">
    <property type="entry name" value="Cys_deSase_IscS"/>
</dbReference>
<dbReference type="InterPro" id="IPR016454">
    <property type="entry name" value="Cysteine_dSase"/>
</dbReference>
<dbReference type="InterPro" id="IPR015424">
    <property type="entry name" value="PyrdxlP-dep_Trfase"/>
</dbReference>
<dbReference type="InterPro" id="IPR015421">
    <property type="entry name" value="PyrdxlP-dep_Trfase_major"/>
</dbReference>
<dbReference type="InterPro" id="IPR015422">
    <property type="entry name" value="PyrdxlP-dep_Trfase_small"/>
</dbReference>
<dbReference type="NCBIfam" id="TIGR02006">
    <property type="entry name" value="IscS"/>
    <property type="match status" value="1"/>
</dbReference>
<dbReference type="NCBIfam" id="NF002806">
    <property type="entry name" value="PRK02948.1"/>
    <property type="match status" value="1"/>
</dbReference>
<dbReference type="NCBIfam" id="NF010611">
    <property type="entry name" value="PRK14012.1"/>
    <property type="match status" value="1"/>
</dbReference>
<dbReference type="PANTHER" id="PTHR11601:SF34">
    <property type="entry name" value="CYSTEINE DESULFURASE"/>
    <property type="match status" value="1"/>
</dbReference>
<dbReference type="PANTHER" id="PTHR11601">
    <property type="entry name" value="CYSTEINE DESULFURYLASE FAMILY MEMBER"/>
    <property type="match status" value="1"/>
</dbReference>
<dbReference type="Pfam" id="PF00266">
    <property type="entry name" value="Aminotran_5"/>
    <property type="match status" value="1"/>
</dbReference>
<dbReference type="PIRSF" id="PIRSF005572">
    <property type="entry name" value="NifS"/>
    <property type="match status" value="1"/>
</dbReference>
<dbReference type="SUPFAM" id="SSF53383">
    <property type="entry name" value="PLP-dependent transferases"/>
    <property type="match status" value="1"/>
</dbReference>
<dbReference type="PROSITE" id="PS00595">
    <property type="entry name" value="AA_TRANSFER_CLASS_5"/>
    <property type="match status" value="1"/>
</dbReference>
<protein>
    <recommendedName>
        <fullName evidence="1">Cysteine desulfurase IscS</fullName>
        <ecNumber evidence="1">2.8.1.7</ecNumber>
    </recommendedName>
</protein>
<evidence type="ECO:0000255" key="1">
    <source>
        <dbReference type="HAMAP-Rule" id="MF_00331"/>
    </source>
</evidence>
<gene>
    <name evidence="1" type="primary">iscS</name>
    <name type="ordered locus">SeHA_C2805</name>
</gene>
<sequence length="404" mass="45092">MKLPIYLDYSATTPVDPRVAEKMMQFLTLDGTFGNPASRSHRFGWQAEEAVDIARNQIAELVGADPREIVFTSGATESDNLAIKGAANFYQKKGKHIITSKTEHKAVLDTCRQLEREGFEVTYLAPQRNGIIDLNELEAAMRDDTILVSIMHVNNEIGVVQDIATIGEMCRARGIIYHVDATQSVGKLPIDLSQLKVDLMSFSGHKIYGPKGIGALYVRRKPRIRIEAQMHGGGHERGMRSGTLPVHQIVGMGEAYRIAKEEMETEMARLRGLRNRLWNGIKDIEEVYLNGDLEQGAPNILNVSFNYVEGESLIMALKDLAVSSGSACTSASLEPSYVLRALGMNDELAHSSIRFSLGRFTTEEEIDYTIDLVRKSIGRLRDLSPLWEMYKQGVDLNSIEWAHH</sequence>
<reference key="1">
    <citation type="journal article" date="2011" name="J. Bacteriol.">
        <title>Comparative genomics of 28 Salmonella enterica isolates: evidence for CRISPR-mediated adaptive sublineage evolution.</title>
        <authorList>
            <person name="Fricke W.F."/>
            <person name="Mammel M.K."/>
            <person name="McDermott P.F."/>
            <person name="Tartera C."/>
            <person name="White D.G."/>
            <person name="Leclerc J.E."/>
            <person name="Ravel J."/>
            <person name="Cebula T.A."/>
        </authorList>
    </citation>
    <scope>NUCLEOTIDE SEQUENCE [LARGE SCALE GENOMIC DNA]</scope>
    <source>
        <strain>SL476</strain>
    </source>
</reference>
<accession>B4TDB6</accession>
<organism>
    <name type="scientific">Salmonella heidelberg (strain SL476)</name>
    <dbReference type="NCBI Taxonomy" id="454169"/>
    <lineage>
        <taxon>Bacteria</taxon>
        <taxon>Pseudomonadati</taxon>
        <taxon>Pseudomonadota</taxon>
        <taxon>Gammaproteobacteria</taxon>
        <taxon>Enterobacterales</taxon>
        <taxon>Enterobacteriaceae</taxon>
        <taxon>Salmonella</taxon>
    </lineage>
</organism>